<accession>Q1R0I4</accession>
<organism>
    <name type="scientific">Chromohalobacter salexigens (strain ATCC BAA-138 / DSM 3043 / CIP 106854 / NCIMB 13768 / 1H11)</name>
    <dbReference type="NCBI Taxonomy" id="290398"/>
    <lineage>
        <taxon>Bacteria</taxon>
        <taxon>Pseudomonadati</taxon>
        <taxon>Pseudomonadota</taxon>
        <taxon>Gammaproteobacteria</taxon>
        <taxon>Oceanospirillales</taxon>
        <taxon>Halomonadaceae</taxon>
        <taxon>Chromohalobacter</taxon>
    </lineage>
</organism>
<keyword id="KW-1185">Reference proteome</keyword>
<keyword id="KW-0687">Ribonucleoprotein</keyword>
<keyword id="KW-0689">Ribosomal protein</keyword>
<keyword id="KW-0694">RNA-binding</keyword>
<keyword id="KW-0699">rRNA-binding</keyword>
<gene>
    <name evidence="1" type="primary">rplJ</name>
    <name type="ordered locus">Csal_0412</name>
</gene>
<protein>
    <recommendedName>
        <fullName evidence="1">Large ribosomal subunit protein uL10</fullName>
    </recommendedName>
    <alternativeName>
        <fullName evidence="2">50S ribosomal protein L10</fullName>
    </alternativeName>
</protein>
<sequence>MPLALEGKKAIVAEVSEAAQDALSVVVADSRGVAVSAMTELRKQARENGVQVRVVRNTLARRALEGTPWECLNETFSGPTLLAFSYEHPGAAARLFKEFAKNEKDFEVKALAYEGEFIPASELDRLATLPTRDEAIAKLMSVMKEASAGKLVRTLAALRDQKQEEAA</sequence>
<feature type="chain" id="PRO_1000005487" description="Large ribosomal subunit protein uL10">
    <location>
        <begin position="1"/>
        <end position="167"/>
    </location>
</feature>
<comment type="function">
    <text evidence="1">Forms part of the ribosomal stalk, playing a central role in the interaction of the ribosome with GTP-bound translation factors.</text>
</comment>
<comment type="subunit">
    <text evidence="1">Part of the ribosomal stalk of the 50S ribosomal subunit. The N-terminus interacts with L11 and the large rRNA to form the base of the stalk. The C-terminus forms an elongated spine to which L12 dimers bind in a sequential fashion forming a multimeric L10(L12)X complex.</text>
</comment>
<comment type="similarity">
    <text evidence="1">Belongs to the universal ribosomal protein uL10 family.</text>
</comment>
<dbReference type="EMBL" id="CP000285">
    <property type="protein sequence ID" value="ABE57774.1"/>
    <property type="molecule type" value="Genomic_DNA"/>
</dbReference>
<dbReference type="RefSeq" id="WP_011505720.1">
    <property type="nucleotide sequence ID" value="NC_007963.1"/>
</dbReference>
<dbReference type="STRING" id="290398.Csal_0412"/>
<dbReference type="GeneID" id="95333165"/>
<dbReference type="KEGG" id="csa:Csal_0412"/>
<dbReference type="eggNOG" id="COG0244">
    <property type="taxonomic scope" value="Bacteria"/>
</dbReference>
<dbReference type="HOGENOM" id="CLU_092227_0_2_6"/>
<dbReference type="OrthoDB" id="9808307at2"/>
<dbReference type="Proteomes" id="UP000000239">
    <property type="component" value="Chromosome"/>
</dbReference>
<dbReference type="GO" id="GO:1990904">
    <property type="term" value="C:ribonucleoprotein complex"/>
    <property type="evidence" value="ECO:0007669"/>
    <property type="project" value="UniProtKB-KW"/>
</dbReference>
<dbReference type="GO" id="GO:0005840">
    <property type="term" value="C:ribosome"/>
    <property type="evidence" value="ECO:0007669"/>
    <property type="project" value="UniProtKB-KW"/>
</dbReference>
<dbReference type="GO" id="GO:0070180">
    <property type="term" value="F:large ribosomal subunit rRNA binding"/>
    <property type="evidence" value="ECO:0007669"/>
    <property type="project" value="UniProtKB-UniRule"/>
</dbReference>
<dbReference type="GO" id="GO:0006412">
    <property type="term" value="P:translation"/>
    <property type="evidence" value="ECO:0007669"/>
    <property type="project" value="UniProtKB-UniRule"/>
</dbReference>
<dbReference type="CDD" id="cd05797">
    <property type="entry name" value="Ribosomal_L10"/>
    <property type="match status" value="1"/>
</dbReference>
<dbReference type="FunFam" id="3.30.70.1730:FF:000001">
    <property type="entry name" value="50S ribosomal protein L10"/>
    <property type="match status" value="1"/>
</dbReference>
<dbReference type="Gene3D" id="3.30.70.1730">
    <property type="match status" value="1"/>
</dbReference>
<dbReference type="Gene3D" id="6.10.250.2350">
    <property type="match status" value="1"/>
</dbReference>
<dbReference type="HAMAP" id="MF_00362">
    <property type="entry name" value="Ribosomal_uL10"/>
    <property type="match status" value="1"/>
</dbReference>
<dbReference type="InterPro" id="IPR001790">
    <property type="entry name" value="Ribosomal_uL10"/>
</dbReference>
<dbReference type="InterPro" id="IPR043141">
    <property type="entry name" value="Ribosomal_uL10-like_sf"/>
</dbReference>
<dbReference type="InterPro" id="IPR022973">
    <property type="entry name" value="Ribosomal_uL10_bac"/>
</dbReference>
<dbReference type="InterPro" id="IPR047865">
    <property type="entry name" value="Ribosomal_uL10_bac_type"/>
</dbReference>
<dbReference type="NCBIfam" id="NF000955">
    <property type="entry name" value="PRK00099.1-1"/>
    <property type="match status" value="1"/>
</dbReference>
<dbReference type="PANTHER" id="PTHR11560">
    <property type="entry name" value="39S RIBOSOMAL PROTEIN L10, MITOCHONDRIAL"/>
    <property type="match status" value="1"/>
</dbReference>
<dbReference type="Pfam" id="PF00466">
    <property type="entry name" value="Ribosomal_L10"/>
    <property type="match status" value="1"/>
</dbReference>
<dbReference type="SUPFAM" id="SSF160369">
    <property type="entry name" value="Ribosomal protein L10-like"/>
    <property type="match status" value="1"/>
</dbReference>
<reference key="1">
    <citation type="journal article" date="2011" name="Stand. Genomic Sci.">
        <title>Complete genome sequence of the halophilic and highly halotolerant Chromohalobacter salexigens type strain (1H11(T)).</title>
        <authorList>
            <person name="Copeland A."/>
            <person name="O'Connor K."/>
            <person name="Lucas S."/>
            <person name="Lapidus A."/>
            <person name="Berry K.W."/>
            <person name="Detter J.C."/>
            <person name="Del Rio T.G."/>
            <person name="Hammon N."/>
            <person name="Dalin E."/>
            <person name="Tice H."/>
            <person name="Pitluck S."/>
            <person name="Bruce D."/>
            <person name="Goodwin L."/>
            <person name="Han C."/>
            <person name="Tapia R."/>
            <person name="Saunders E."/>
            <person name="Schmutz J."/>
            <person name="Brettin T."/>
            <person name="Larimer F."/>
            <person name="Land M."/>
            <person name="Hauser L."/>
            <person name="Vargas C."/>
            <person name="Nieto J.J."/>
            <person name="Kyrpides N.C."/>
            <person name="Ivanova N."/>
            <person name="Goker M."/>
            <person name="Klenk H.P."/>
            <person name="Csonka L.N."/>
            <person name="Woyke T."/>
        </authorList>
    </citation>
    <scope>NUCLEOTIDE SEQUENCE [LARGE SCALE GENOMIC DNA]</scope>
    <source>
        <strain>ATCC BAA-138 / DSM 3043 / CIP 106854 / NCIMB 13768 / 1H11</strain>
    </source>
</reference>
<proteinExistence type="inferred from homology"/>
<name>RL10_CHRSD</name>
<evidence type="ECO:0000255" key="1">
    <source>
        <dbReference type="HAMAP-Rule" id="MF_00362"/>
    </source>
</evidence>
<evidence type="ECO:0000305" key="2"/>